<keyword id="KW-0030">Aminoacyl-tRNA synthetase</keyword>
<keyword id="KW-0067">ATP-binding</keyword>
<keyword id="KW-0963">Cytoplasm</keyword>
<keyword id="KW-0436">Ligase</keyword>
<keyword id="KW-0547">Nucleotide-binding</keyword>
<keyword id="KW-0648">Protein biosynthesis</keyword>
<protein>
    <recommendedName>
        <fullName evidence="1">Valine--tRNA ligase</fullName>
        <ecNumber evidence="1">6.1.1.9</ecNumber>
    </recommendedName>
    <alternativeName>
        <fullName evidence="1">Valyl-tRNA synthetase</fullName>
        <shortName evidence="1">ValRS</shortName>
    </alternativeName>
</protein>
<gene>
    <name evidence="1" type="primary">valS</name>
    <name type="ordered locus">RF_0229</name>
</gene>
<name>SYV_RICFE</name>
<accession>Q4UMX8</accession>
<evidence type="ECO:0000255" key="1">
    <source>
        <dbReference type="HAMAP-Rule" id="MF_02005"/>
    </source>
</evidence>
<proteinExistence type="inferred from homology"/>
<organism>
    <name type="scientific">Rickettsia felis (strain ATCC VR-1525 / URRWXCal2)</name>
    <name type="common">Rickettsia azadi</name>
    <dbReference type="NCBI Taxonomy" id="315456"/>
    <lineage>
        <taxon>Bacteria</taxon>
        <taxon>Pseudomonadati</taxon>
        <taxon>Pseudomonadota</taxon>
        <taxon>Alphaproteobacteria</taxon>
        <taxon>Rickettsiales</taxon>
        <taxon>Rickettsiaceae</taxon>
        <taxon>Rickettsieae</taxon>
        <taxon>Rickettsia</taxon>
        <taxon>spotted fever group</taxon>
    </lineage>
</organism>
<comment type="function">
    <text evidence="1">Catalyzes the attachment of valine to tRNA(Val). As ValRS can inadvertently accommodate and process structurally similar amino acids such as threonine, to avoid such errors, it has a 'posttransfer' editing activity that hydrolyzes mischarged Thr-tRNA(Val) in a tRNA-dependent manner.</text>
</comment>
<comment type="catalytic activity">
    <reaction evidence="1">
        <text>tRNA(Val) + L-valine + ATP = L-valyl-tRNA(Val) + AMP + diphosphate</text>
        <dbReference type="Rhea" id="RHEA:10704"/>
        <dbReference type="Rhea" id="RHEA-COMP:9672"/>
        <dbReference type="Rhea" id="RHEA-COMP:9708"/>
        <dbReference type="ChEBI" id="CHEBI:30616"/>
        <dbReference type="ChEBI" id="CHEBI:33019"/>
        <dbReference type="ChEBI" id="CHEBI:57762"/>
        <dbReference type="ChEBI" id="CHEBI:78442"/>
        <dbReference type="ChEBI" id="CHEBI:78537"/>
        <dbReference type="ChEBI" id="CHEBI:456215"/>
        <dbReference type="EC" id="6.1.1.9"/>
    </reaction>
</comment>
<comment type="subunit">
    <text evidence="1">Monomer.</text>
</comment>
<comment type="subcellular location">
    <subcellularLocation>
        <location evidence="1">Cytoplasm</location>
    </subcellularLocation>
</comment>
<comment type="domain">
    <text evidence="1">ValRS has two distinct active sites: one for aminoacylation and one for editing. The misactivated threonine is translocated from the active site to the editing site.</text>
</comment>
<comment type="similarity">
    <text evidence="1">Belongs to the class-I aminoacyl-tRNA synthetase family. ValS type 2 subfamily.</text>
</comment>
<dbReference type="EC" id="6.1.1.9" evidence="1"/>
<dbReference type="EMBL" id="CP000053">
    <property type="protein sequence ID" value="AAY61080.1"/>
    <property type="molecule type" value="Genomic_DNA"/>
</dbReference>
<dbReference type="SMR" id="Q4UMX8"/>
<dbReference type="STRING" id="315456.RF_0229"/>
<dbReference type="KEGG" id="rfe:RF_0229"/>
<dbReference type="eggNOG" id="COG0525">
    <property type="taxonomic scope" value="Bacteria"/>
</dbReference>
<dbReference type="HOGENOM" id="CLU_001493_0_2_5"/>
<dbReference type="OrthoDB" id="9810365at2"/>
<dbReference type="Proteomes" id="UP000008548">
    <property type="component" value="Chromosome"/>
</dbReference>
<dbReference type="GO" id="GO:0005829">
    <property type="term" value="C:cytosol"/>
    <property type="evidence" value="ECO:0007669"/>
    <property type="project" value="TreeGrafter"/>
</dbReference>
<dbReference type="GO" id="GO:0002161">
    <property type="term" value="F:aminoacyl-tRNA deacylase activity"/>
    <property type="evidence" value="ECO:0007669"/>
    <property type="project" value="InterPro"/>
</dbReference>
<dbReference type="GO" id="GO:0005524">
    <property type="term" value="F:ATP binding"/>
    <property type="evidence" value="ECO:0007669"/>
    <property type="project" value="UniProtKB-UniRule"/>
</dbReference>
<dbReference type="GO" id="GO:0004832">
    <property type="term" value="F:valine-tRNA ligase activity"/>
    <property type="evidence" value="ECO:0007669"/>
    <property type="project" value="UniProtKB-UniRule"/>
</dbReference>
<dbReference type="GO" id="GO:0006438">
    <property type="term" value="P:valyl-tRNA aminoacylation"/>
    <property type="evidence" value="ECO:0007669"/>
    <property type="project" value="UniProtKB-UniRule"/>
</dbReference>
<dbReference type="CDD" id="cd07962">
    <property type="entry name" value="Anticodon_Ia_Val"/>
    <property type="match status" value="1"/>
</dbReference>
<dbReference type="FunFam" id="1.10.730.10:FF:000033">
    <property type="entry name" value="Valine--tRNA ligase"/>
    <property type="match status" value="1"/>
</dbReference>
<dbReference type="FunFam" id="3.40.50.620:FF:000192">
    <property type="entry name" value="Valine--tRNA ligase"/>
    <property type="match status" value="1"/>
</dbReference>
<dbReference type="Gene3D" id="3.40.50.620">
    <property type="entry name" value="HUPs"/>
    <property type="match status" value="2"/>
</dbReference>
<dbReference type="Gene3D" id="1.10.730.10">
    <property type="entry name" value="Isoleucyl-tRNA Synthetase, Domain 1"/>
    <property type="match status" value="1"/>
</dbReference>
<dbReference type="HAMAP" id="MF_02005">
    <property type="entry name" value="Val_tRNA_synth_type2"/>
    <property type="match status" value="1"/>
</dbReference>
<dbReference type="InterPro" id="IPR001412">
    <property type="entry name" value="aa-tRNA-synth_I_CS"/>
</dbReference>
<dbReference type="InterPro" id="IPR002300">
    <property type="entry name" value="aa-tRNA-synth_Ia"/>
</dbReference>
<dbReference type="InterPro" id="IPR033705">
    <property type="entry name" value="Anticodon_Ia_Val"/>
</dbReference>
<dbReference type="InterPro" id="IPR013155">
    <property type="entry name" value="M/V/L/I-tRNA-synth_anticd-bd"/>
</dbReference>
<dbReference type="InterPro" id="IPR014729">
    <property type="entry name" value="Rossmann-like_a/b/a_fold"/>
</dbReference>
<dbReference type="InterPro" id="IPR005728">
    <property type="entry name" value="RPE1"/>
</dbReference>
<dbReference type="InterPro" id="IPR009080">
    <property type="entry name" value="tRNAsynth_Ia_anticodon-bd"/>
</dbReference>
<dbReference type="InterPro" id="IPR009008">
    <property type="entry name" value="Val/Leu/Ile-tRNA-synth_edit"/>
</dbReference>
<dbReference type="InterPro" id="IPR022874">
    <property type="entry name" value="Valine-tRNA_ligase_type_2"/>
</dbReference>
<dbReference type="InterPro" id="IPR002303">
    <property type="entry name" value="Valyl-tRNA_ligase"/>
</dbReference>
<dbReference type="NCBIfam" id="NF009687">
    <property type="entry name" value="PRK13208.1"/>
    <property type="match status" value="1"/>
</dbReference>
<dbReference type="NCBIfam" id="TIGR01045">
    <property type="entry name" value="RPE1"/>
    <property type="match status" value="1"/>
</dbReference>
<dbReference type="NCBIfam" id="TIGR00422">
    <property type="entry name" value="valS"/>
    <property type="match status" value="1"/>
</dbReference>
<dbReference type="PANTHER" id="PTHR11946:SF93">
    <property type="entry name" value="VALINE--TRNA LIGASE, CHLOROPLASTIC_MITOCHONDRIAL 2"/>
    <property type="match status" value="1"/>
</dbReference>
<dbReference type="PANTHER" id="PTHR11946">
    <property type="entry name" value="VALYL-TRNA SYNTHETASES"/>
    <property type="match status" value="1"/>
</dbReference>
<dbReference type="Pfam" id="PF08264">
    <property type="entry name" value="Anticodon_1"/>
    <property type="match status" value="1"/>
</dbReference>
<dbReference type="Pfam" id="PF00133">
    <property type="entry name" value="tRNA-synt_1"/>
    <property type="match status" value="1"/>
</dbReference>
<dbReference type="PRINTS" id="PR00986">
    <property type="entry name" value="TRNASYNTHVAL"/>
</dbReference>
<dbReference type="SUPFAM" id="SSF47323">
    <property type="entry name" value="Anticodon-binding domain of a subclass of class I aminoacyl-tRNA synthetases"/>
    <property type="match status" value="1"/>
</dbReference>
<dbReference type="SUPFAM" id="SSF52374">
    <property type="entry name" value="Nucleotidylyl transferase"/>
    <property type="match status" value="1"/>
</dbReference>
<dbReference type="SUPFAM" id="SSF50677">
    <property type="entry name" value="ValRS/IleRS/LeuRS editing domain"/>
    <property type="match status" value="1"/>
</dbReference>
<dbReference type="PROSITE" id="PS00178">
    <property type="entry name" value="AA_TRNA_LIGASE_I"/>
    <property type="match status" value="1"/>
</dbReference>
<feature type="chain" id="PRO_0000224614" description="Valine--tRNA ligase">
    <location>
        <begin position="1"/>
        <end position="859"/>
    </location>
</feature>
<feature type="short sequence motif" description="'HIGH' region">
    <location>
        <begin position="46"/>
        <end position="56"/>
    </location>
</feature>
<feature type="short sequence motif" description="'KMSKS' region">
    <location>
        <begin position="583"/>
        <end position="587"/>
    </location>
</feature>
<feature type="binding site" evidence="1">
    <location>
        <position position="586"/>
    </location>
    <ligand>
        <name>ATP</name>
        <dbReference type="ChEBI" id="CHEBI:30616"/>
    </ligand>
</feature>
<sequence length="859" mass="99399">MKEFPKNYNFTENEKKWQQIWQEKQIYAYDPNISKDEIYVVDTPPPTVSGQLHIGHVYSYTQTDFIVRFQRMMGKNIFYPMGFDDNGLPTERLVEKQKQIKAYNMSRSEFIKICEEVVASEEEKFRSLFNQIALSVDWSLEYQTISPLSRKISQMSFLDLVKKGEVYRNDQPILWDPVDGTALAQADIDDKEKTSFMNYITFEIEEDDRPFSKFAYREEFVGNTEHSTAAYIKVREDASTGLTHKLPLEVEFGKRSITIATTRPELLPACVAVFYHPDDKRYKHLAGKSAITPLFNGKVPLLADPLVQQDKGTGLVMCCTFGDQTDITWWKTHNLPLKTIVTKKGTIDFPHDIAIDGLKIKEARTKIIDILKEQNLLTKQEEITHTVKCAERSGAPLEILTVPQWFVKTISHKEALLKRASELNWHPKNMKIRLESWINSISWDWCISRQRYFGVPFPVWYSKRVGEEGKILYADISQLPVDPLKDLPIGYSKEEVEPDLDVMDTWATSSVSPQLSTHGISDDFTVNKERHDKLFPMELRPQAHEIIRTWAFYTILKAHLHQNTLPWKNIMVSGWCLAEDRSKMSKSKGNVLVPEKLLEQYGSDVIRYWSANSKLGADTAYSEDVMKNGKRLVNKLWNAAKFVSIHFEKLKDKDKQAKLLDVKEKITNEFDQWMINKLVELVKLATNELQNYEYANAMHLTEKFFWAIFCDNYLEISKNRAYDEENKNPSGQYSSILTLYHTMQILLKLFAPFMPHITEELYQILYSDKSVHEKGNWVNYGDLNYKIDAKGAEGLLEILDIVRKFKAEKNLSIKAPIKLLEVSGIELSAELTEDLKNVTSAEEIQFEDQGDKIKVNVIL</sequence>
<reference key="1">
    <citation type="journal article" date="2005" name="PLoS Biol.">
        <title>The genome sequence of Rickettsia felis identifies the first putative conjugative plasmid in an obligate intracellular parasite.</title>
        <authorList>
            <person name="Ogata H."/>
            <person name="Renesto P."/>
            <person name="Audic S."/>
            <person name="Robert C."/>
            <person name="Blanc G."/>
            <person name="Fournier P.-E."/>
            <person name="Parinello H."/>
            <person name="Claverie J.-M."/>
            <person name="Raoult D."/>
        </authorList>
    </citation>
    <scope>NUCLEOTIDE SEQUENCE [LARGE SCALE GENOMIC DNA]</scope>
    <source>
        <strain>ATCC VR-1525 / URRWXCal2</strain>
    </source>
</reference>